<feature type="chain" id="PRO_0000212420" description="Man(5)GlcNAc(2)-PP-dolichol translocation protein RFT1">
    <location>
        <begin position="1"/>
        <end position="574"/>
    </location>
</feature>
<feature type="topological domain" description="Lumenal" evidence="1">
    <location>
        <begin position="1"/>
        <end position="24"/>
    </location>
</feature>
<feature type="transmembrane region" description="Helical" evidence="1">
    <location>
        <begin position="25"/>
        <end position="45"/>
    </location>
</feature>
<feature type="topological domain" description="Cytoplasmic" evidence="1">
    <location>
        <begin position="46"/>
        <end position="48"/>
    </location>
</feature>
<feature type="transmembrane region" description="Helical" evidence="1">
    <location>
        <begin position="49"/>
        <end position="69"/>
    </location>
</feature>
<feature type="topological domain" description="Lumenal" evidence="1">
    <location>
        <begin position="70"/>
        <end position="110"/>
    </location>
</feature>
<feature type="transmembrane region" description="Helical" evidence="1">
    <location>
        <begin position="111"/>
        <end position="131"/>
    </location>
</feature>
<feature type="topological domain" description="Cytoplasmic" evidence="1">
    <location>
        <begin position="132"/>
        <end position="148"/>
    </location>
</feature>
<feature type="transmembrane region" description="Helical" evidence="1">
    <location>
        <begin position="149"/>
        <end position="169"/>
    </location>
</feature>
<feature type="topological domain" description="Lumenal" evidence="1">
    <location>
        <begin position="170"/>
        <end position="181"/>
    </location>
</feature>
<feature type="transmembrane region" description="Helical" evidence="1">
    <location>
        <begin position="182"/>
        <end position="202"/>
    </location>
</feature>
<feature type="topological domain" description="Cytoplasmic" evidence="1">
    <location>
        <begin position="203"/>
        <end position="218"/>
    </location>
</feature>
<feature type="transmembrane region" description="Helical" evidence="1">
    <location>
        <begin position="219"/>
        <end position="239"/>
    </location>
</feature>
<feature type="topological domain" description="Lumenal" evidence="1">
    <location>
        <begin position="240"/>
        <end position="319"/>
    </location>
</feature>
<feature type="transmembrane region" description="Helical" evidence="1">
    <location>
        <begin position="320"/>
        <end position="340"/>
    </location>
</feature>
<feature type="topological domain" description="Cytoplasmic" evidence="1">
    <location>
        <begin position="341"/>
        <end position="372"/>
    </location>
</feature>
<feature type="transmembrane region" description="Helical" evidence="1">
    <location>
        <begin position="373"/>
        <end position="393"/>
    </location>
</feature>
<feature type="topological domain" description="Lumenal" evidence="1">
    <location>
        <begin position="394"/>
        <end position="413"/>
    </location>
</feature>
<feature type="transmembrane region" description="Helical" evidence="1">
    <location>
        <begin position="414"/>
        <end position="434"/>
    </location>
</feature>
<feature type="topological domain" description="Cytoplasmic" evidence="1">
    <location>
        <begin position="435"/>
        <end position="443"/>
    </location>
</feature>
<feature type="transmembrane region" description="Helical" evidence="1">
    <location>
        <begin position="444"/>
        <end position="464"/>
    </location>
</feature>
<feature type="topological domain" description="Lumenal" evidence="1">
    <location>
        <begin position="465"/>
        <end position="469"/>
    </location>
</feature>
<feature type="transmembrane region" description="Helical" evidence="1">
    <location>
        <begin position="470"/>
        <end position="490"/>
    </location>
</feature>
<feature type="topological domain" description="Cytoplasmic" evidence="1">
    <location>
        <begin position="491"/>
        <end position="509"/>
    </location>
</feature>
<feature type="transmembrane region" description="Helical" evidence="1">
    <location>
        <begin position="510"/>
        <end position="530"/>
    </location>
</feature>
<feature type="topological domain" description="Lumenal" evidence="1">
    <location>
        <begin position="531"/>
        <end position="532"/>
    </location>
</feature>
<feature type="transmembrane region" description="Helical" evidence="1">
    <location>
        <begin position="533"/>
        <end position="553"/>
    </location>
</feature>
<feature type="topological domain" description="Cytoplasmic" evidence="1">
    <location>
        <begin position="554"/>
        <end position="574"/>
    </location>
</feature>
<feature type="sequence conflict" description="In Ref. 4; AAA53537." evidence="4" ref="4">
    <original>IR</original>
    <variation>MF</variation>
    <location>
        <begin position="74"/>
        <end position="75"/>
    </location>
</feature>
<feature type="sequence conflict" description="In Ref. 4; AAA53537." evidence="4" ref="4">
    <original>PMGVVTSDID</original>
    <variation>QWGLSHRTLT</variation>
    <location>
        <begin position="207"/>
        <end position="216"/>
    </location>
</feature>
<comment type="function">
    <text evidence="2 3">Intramembrane glycolipid transporter that operates in the biosynthetic pathway of dolichol-linked oligosaccharides, the glycan precursors employed in protein asparagine (N)-glycosylation. The sequential addition of sugars to dolichol pyrophosphate produces dolichol-linked oligosaccharides containing fourteen sugars, including two GlcNAcs, nine mannoses and three glucoses. Once assembled, the oligosaccharide is transferred from the lipid to nascent proteins by oligosaccharyltransferases. The assembly of dolichol-linked oligosaccharides begins on the cytosolic side of the endoplasmic reticulum membrane and finishes in its lumen. RFT1 could mediate the translocation of the cytosolically oriented intermediate DolPP-GlcNAc2Man5, produced by ALG11, into the ER lumen where dolichol-linked oligosaccharides assembly continues (PubMed:11807558). However, the intramembrane lipid transporter activity could not be confirmed in vitro (PubMed:18668045).</text>
</comment>
<comment type="pathway">
    <text evidence="2">Protein modification; protein glycosylation.</text>
</comment>
<comment type="subcellular location">
    <subcellularLocation>
        <location evidence="2">Endoplasmic reticulum membrane</location>
        <topology evidence="1">Multi-pass membrane protein</topology>
    </subcellularLocation>
</comment>
<comment type="similarity">
    <text evidence="4">Belongs to the RFT1 family.</text>
</comment>
<organism>
    <name type="scientific">Saccharomyces cerevisiae (strain ATCC 204508 / S288c)</name>
    <name type="common">Baker's yeast</name>
    <dbReference type="NCBI Taxonomy" id="559292"/>
    <lineage>
        <taxon>Eukaryota</taxon>
        <taxon>Fungi</taxon>
        <taxon>Dikarya</taxon>
        <taxon>Ascomycota</taxon>
        <taxon>Saccharomycotina</taxon>
        <taxon>Saccharomycetes</taxon>
        <taxon>Saccharomycetales</taxon>
        <taxon>Saccharomycetaceae</taxon>
        <taxon>Saccharomyces</taxon>
    </lineage>
</organism>
<accession>P38206</accession>
<accession>D6VPY0</accession>
<accession>Q05814</accession>
<keyword id="KW-0256">Endoplasmic reticulum</keyword>
<keyword id="KW-0472">Membrane</keyword>
<keyword id="KW-1185">Reference proteome</keyword>
<keyword id="KW-0762">Sugar transport</keyword>
<keyword id="KW-0812">Transmembrane</keyword>
<keyword id="KW-1133">Transmembrane helix</keyword>
<keyword id="KW-0813">Transport</keyword>
<name>RFT1_YEAST</name>
<protein>
    <recommendedName>
        <fullName evidence="5">Man(5)GlcNAc(2)-PP-dolichol translocation protein RFT1</fullName>
    </recommendedName>
    <alternativeName>
        <fullName evidence="6">Requiring fifty-three protein 1</fullName>
    </alternativeName>
</protein>
<sequence length="574" mass="66211">MAKKNSQLPSTSEQILERSTTGATFLMMGQLFTKLVTFILNNLLIRFLSPRIFGITAFLEFIQGTVLFFSRDAIRLSTLRISDSGNGIIDDDDEEEYQETHYKSKVLQTAVNFAYIPFWIGFPLSIGLIAWQYRNINAYFITLPFFRWSIFLIWLSIIVELLSEPFFIVNQFMLNYAARSRFESIAVTTGCIVNFIVVYAVQQSRYPMGVVTSDIDKEGIAILAFALGKLAHSITLLACYYWDYLKNFKPKKLFSTRLTKIKTRENNELKKGYPKSTSYFFQNDILQHFKKVYFQLCFKHLLTEGDKLIINSLCTVEEQGIYALLSNYGSLLTRLLFAPIEESLRLFLARLLSSHNPKNLKLSIEVLVNLTRFYIYLSLMIIVFGPANSSFLLQFLIGSKWSTTSVLDTIRVYCFYIPFLSLNGIFEAFFQSVATGDQILKHSYFMMAFSGIFLLNSWLLIEKLKLSIEGLILSNIINMVLRILYCGVFLNKFHRELFTDSSFFFNFKDFKTVIIAGSTICLLDWWFIGYVKNLQQFVVNVLFAMGLLALILVKERQTIQSFINKRAVSNSKDV</sequence>
<proteinExistence type="evidence at protein level"/>
<reference key="1">
    <citation type="journal article" date="1995" name="J. Biol. Chem.">
        <title>Suppression of the yeast mutation rft1-1 by human p53.</title>
        <authorList>
            <person name="Koerte A."/>
            <person name="Chong T."/>
            <person name="Li X."/>
            <person name="Wahane K."/>
            <person name="Cai M."/>
        </authorList>
    </citation>
    <scope>NUCLEOTIDE SEQUENCE [GENOMIC DNA]</scope>
    <source>
        <strain>YMW2</strain>
    </source>
</reference>
<reference key="2">
    <citation type="journal article" date="1994" name="EMBO J.">
        <title>Complete DNA sequence of yeast chromosome II.</title>
        <authorList>
            <person name="Feldmann H."/>
            <person name="Aigle M."/>
            <person name="Aljinovic G."/>
            <person name="Andre B."/>
            <person name="Baclet M.C."/>
            <person name="Barthe C."/>
            <person name="Baur A."/>
            <person name="Becam A.-M."/>
            <person name="Biteau N."/>
            <person name="Boles E."/>
            <person name="Brandt T."/>
            <person name="Brendel M."/>
            <person name="Brueckner M."/>
            <person name="Bussereau F."/>
            <person name="Christiansen C."/>
            <person name="Contreras R."/>
            <person name="Crouzet M."/>
            <person name="Cziepluch C."/>
            <person name="Demolis N."/>
            <person name="Delaveau T."/>
            <person name="Doignon F."/>
            <person name="Domdey H."/>
            <person name="Duesterhus S."/>
            <person name="Dubois E."/>
            <person name="Dujon B."/>
            <person name="El Bakkoury M."/>
            <person name="Entian K.-D."/>
            <person name="Feuermann M."/>
            <person name="Fiers W."/>
            <person name="Fobo G.M."/>
            <person name="Fritz C."/>
            <person name="Gassenhuber J."/>
            <person name="Glansdorff N."/>
            <person name="Goffeau A."/>
            <person name="Grivell L.A."/>
            <person name="de Haan M."/>
            <person name="Hein C."/>
            <person name="Herbert C.J."/>
            <person name="Hollenberg C.P."/>
            <person name="Holmstroem K."/>
            <person name="Jacq C."/>
            <person name="Jacquet M."/>
            <person name="Jauniaux J.-C."/>
            <person name="Jonniaux J.-L."/>
            <person name="Kallesoee T."/>
            <person name="Kiesau P."/>
            <person name="Kirchrath L."/>
            <person name="Koetter P."/>
            <person name="Korol S."/>
            <person name="Liebl S."/>
            <person name="Logghe M."/>
            <person name="Lohan A.J.E."/>
            <person name="Louis E.J."/>
            <person name="Li Z.Y."/>
            <person name="Maat M.J."/>
            <person name="Mallet L."/>
            <person name="Mannhaupt G."/>
            <person name="Messenguy F."/>
            <person name="Miosga T."/>
            <person name="Molemans F."/>
            <person name="Mueller S."/>
            <person name="Nasr F."/>
            <person name="Obermaier B."/>
            <person name="Perea J."/>
            <person name="Pierard A."/>
            <person name="Piravandi E."/>
            <person name="Pohl F.M."/>
            <person name="Pohl T.M."/>
            <person name="Potier S."/>
            <person name="Proft M."/>
            <person name="Purnelle B."/>
            <person name="Ramezani Rad M."/>
            <person name="Rieger M."/>
            <person name="Rose M."/>
            <person name="Schaaff-Gerstenschlaeger I."/>
            <person name="Scherens B."/>
            <person name="Schwarzlose C."/>
            <person name="Skala J."/>
            <person name="Slonimski P.P."/>
            <person name="Smits P.H.M."/>
            <person name="Souciet J.-L."/>
            <person name="Steensma H.Y."/>
            <person name="Stucka R."/>
            <person name="Urrestarazu L.A."/>
            <person name="van der Aart Q.J.M."/>
            <person name="Van Dyck L."/>
            <person name="Vassarotti A."/>
            <person name="Vetter I."/>
            <person name="Vierendeels F."/>
            <person name="Vissers S."/>
            <person name="Wagner G."/>
            <person name="de Wergifosse P."/>
            <person name="Wolfe K.H."/>
            <person name="Zagulski M."/>
            <person name="Zimmermann F.K."/>
            <person name="Mewes H.-W."/>
            <person name="Kleine K."/>
        </authorList>
    </citation>
    <scope>NUCLEOTIDE SEQUENCE [LARGE SCALE GENOMIC DNA]</scope>
    <source>
        <strain>ATCC 204508 / S288c</strain>
    </source>
</reference>
<reference key="3">
    <citation type="journal article" date="2014" name="G3 (Bethesda)">
        <title>The reference genome sequence of Saccharomyces cerevisiae: Then and now.</title>
        <authorList>
            <person name="Engel S.R."/>
            <person name="Dietrich F.S."/>
            <person name="Fisk D.G."/>
            <person name="Binkley G."/>
            <person name="Balakrishnan R."/>
            <person name="Costanzo M.C."/>
            <person name="Dwight S.S."/>
            <person name="Hitz B.C."/>
            <person name="Karra K."/>
            <person name="Nash R.S."/>
            <person name="Weng S."/>
            <person name="Wong E.D."/>
            <person name="Lloyd P."/>
            <person name="Skrzypek M.S."/>
            <person name="Miyasato S.R."/>
            <person name="Simison M."/>
            <person name="Cherry J.M."/>
        </authorList>
    </citation>
    <scope>GENOME REANNOTATION</scope>
    <source>
        <strain>ATCC 204508 / S288c</strain>
    </source>
</reference>
<reference key="4">
    <citation type="journal article" date="1988" name="Mol. Cell. Biol.">
        <title>The HAP3 regulatory locus of Saccharomyces cerevisiae encodes divergent overlapping transcripts.</title>
        <authorList>
            <person name="Hahn S."/>
            <person name="Pinkham J."/>
            <person name="Wei R."/>
            <person name="Miller R."/>
            <person name="Guarente L."/>
        </authorList>
    </citation>
    <scope>NUCLEOTIDE SEQUENCE [GENOMIC DNA] OF 1-428</scope>
</reference>
<reference key="5">
    <citation type="journal article" date="2002" name="Nature">
        <title>Translocation of lipid-linked oligosaccharides across the ER membrane requires Rft1 protein.</title>
        <authorList>
            <person name="Helenius J."/>
            <person name="Ng D.T.W."/>
            <person name="Marolda C.L."/>
            <person name="Walter P."/>
            <person name="Valvano M.A."/>
            <person name="Aebi M."/>
        </authorList>
    </citation>
    <scope>FUNCTION</scope>
    <scope>PATHWAY</scope>
    <scope>SUBCELLULAR LOCATION</scope>
</reference>
<reference key="6">
    <citation type="journal article" date="2006" name="Proc. Natl. Acad. Sci. U.S.A.">
        <title>A global topology map of the Saccharomyces cerevisiae membrane proteome.</title>
        <authorList>
            <person name="Kim H."/>
            <person name="Melen K."/>
            <person name="Oesterberg M."/>
            <person name="von Heijne G."/>
        </authorList>
    </citation>
    <scope>TOPOLOGY [LARGE SCALE ANALYSIS]</scope>
    <source>
        <strain>ATCC 208353 / W303-1A</strain>
    </source>
</reference>
<reference key="7">
    <citation type="journal article" date="2008" name="Nature">
        <title>Does Rft1 flip an N-glycan lipid precursor?</title>
        <authorList>
            <person name="Frank C.G."/>
            <person name="Sanyal S."/>
            <person name="Rush J.S."/>
            <person name="Waechter C.J."/>
            <person name="Menon A.K."/>
        </authorList>
    </citation>
    <scope>FUNCTION</scope>
</reference>
<reference key="8">
    <citation type="journal article" date="2012" name="Proc. Natl. Acad. Sci. U.S.A.">
        <title>N-terminal acetylome analyses and functional insights of the N-terminal acetyltransferase NatB.</title>
        <authorList>
            <person name="Van Damme P."/>
            <person name="Lasa M."/>
            <person name="Polevoda B."/>
            <person name="Gazquez C."/>
            <person name="Elosegui-Artola A."/>
            <person name="Kim D.S."/>
            <person name="De Juan-Pardo E."/>
            <person name="Demeyer K."/>
            <person name="Hole K."/>
            <person name="Larrea E."/>
            <person name="Timmerman E."/>
            <person name="Prieto J."/>
            <person name="Arnesen T."/>
            <person name="Sherman F."/>
            <person name="Gevaert K."/>
            <person name="Aldabe R."/>
        </authorList>
    </citation>
    <scope>IDENTIFICATION BY MASS SPECTROMETRY [LARGE SCALE ANALYSIS]</scope>
</reference>
<evidence type="ECO:0000255" key="1"/>
<evidence type="ECO:0000269" key="2">
    <source>
    </source>
</evidence>
<evidence type="ECO:0000269" key="3">
    <source>
    </source>
</evidence>
<evidence type="ECO:0000305" key="4"/>
<evidence type="ECO:0000305" key="5">
    <source>
    </source>
</evidence>
<evidence type="ECO:0000312" key="6">
    <source>
        <dbReference type="SGD" id="S000000116"/>
    </source>
</evidence>
<gene>
    <name evidence="6" type="primary">RFT1</name>
    <name type="ordered locus">YBL020W</name>
    <name type="ORF">YBL0442</name>
</gene>
<dbReference type="EMBL" id="U15087">
    <property type="protein sequence ID" value="AAA86312.1"/>
    <property type="molecule type" value="Genomic_DNA"/>
</dbReference>
<dbReference type="EMBL" id="Z35781">
    <property type="protein sequence ID" value="CAA84839.1"/>
    <property type="molecule type" value="Genomic_DNA"/>
</dbReference>
<dbReference type="EMBL" id="M20318">
    <property type="protein sequence ID" value="AAA53537.1"/>
    <property type="molecule type" value="Genomic_DNA"/>
</dbReference>
<dbReference type="EMBL" id="BK006936">
    <property type="protein sequence ID" value="DAA07100.1"/>
    <property type="molecule type" value="Genomic_DNA"/>
</dbReference>
<dbReference type="PIR" id="S45754">
    <property type="entry name" value="S45754"/>
</dbReference>
<dbReference type="RefSeq" id="NP_009533.1">
    <property type="nucleotide sequence ID" value="NM_001178260.1"/>
</dbReference>
<dbReference type="SMR" id="P38206"/>
<dbReference type="BioGRID" id="32678">
    <property type="interactions" value="536"/>
</dbReference>
<dbReference type="DIP" id="DIP-3885N"/>
<dbReference type="FunCoup" id="P38206">
    <property type="interactions" value="808"/>
</dbReference>
<dbReference type="IntAct" id="P38206">
    <property type="interactions" value="5"/>
</dbReference>
<dbReference type="MINT" id="P38206"/>
<dbReference type="STRING" id="4932.YBL020W"/>
<dbReference type="TCDB" id="2.A.66.3.1">
    <property type="family name" value="the multidrug/oligosaccharidyl-lipid/polysaccharide (mop) flippase superfamily"/>
</dbReference>
<dbReference type="iPTMnet" id="P38206"/>
<dbReference type="PaxDb" id="4932-YBL020W"/>
<dbReference type="PeptideAtlas" id="P38206"/>
<dbReference type="EnsemblFungi" id="YBL020W_mRNA">
    <property type="protein sequence ID" value="YBL020W"/>
    <property type="gene ID" value="YBL020W"/>
</dbReference>
<dbReference type="GeneID" id="852261"/>
<dbReference type="KEGG" id="sce:YBL020W"/>
<dbReference type="AGR" id="SGD:S000000116"/>
<dbReference type="SGD" id="S000000116">
    <property type="gene designation" value="RFT1"/>
</dbReference>
<dbReference type="VEuPathDB" id="FungiDB:YBL020W"/>
<dbReference type="eggNOG" id="KOG2864">
    <property type="taxonomic scope" value="Eukaryota"/>
</dbReference>
<dbReference type="GeneTree" id="ENSGT00390000011390"/>
<dbReference type="HOGENOM" id="CLU_023360_3_0_1"/>
<dbReference type="InParanoid" id="P38206"/>
<dbReference type="OMA" id="WPGKLFG"/>
<dbReference type="OrthoDB" id="9979195at2759"/>
<dbReference type="BioCyc" id="MetaCyc:G3O-28923-MONOMER"/>
<dbReference type="BioCyc" id="YEAST:G3O-28923-MONOMER"/>
<dbReference type="UniPathway" id="UPA00378"/>
<dbReference type="BioGRID-ORCS" id="852261">
    <property type="hits" value="10 hits in 10 CRISPR screens"/>
</dbReference>
<dbReference type="PRO" id="PR:P38206"/>
<dbReference type="Proteomes" id="UP000002311">
    <property type="component" value="Chromosome II"/>
</dbReference>
<dbReference type="RNAct" id="P38206">
    <property type="molecule type" value="protein"/>
</dbReference>
<dbReference type="GO" id="GO:0005783">
    <property type="term" value="C:endoplasmic reticulum"/>
    <property type="evidence" value="ECO:0007005"/>
    <property type="project" value="SGD"/>
</dbReference>
<dbReference type="GO" id="GO:0005789">
    <property type="term" value="C:endoplasmic reticulum membrane"/>
    <property type="evidence" value="ECO:0000315"/>
    <property type="project" value="SGD"/>
</dbReference>
<dbReference type="GO" id="GO:0140327">
    <property type="term" value="F:flippase activity"/>
    <property type="evidence" value="ECO:0000314"/>
    <property type="project" value="SGD"/>
</dbReference>
<dbReference type="GO" id="GO:0034202">
    <property type="term" value="F:glycolipid floppase activity"/>
    <property type="evidence" value="ECO:0000304"/>
    <property type="project" value="Reactome"/>
</dbReference>
<dbReference type="GO" id="GO:0006488">
    <property type="term" value="P:dolichol-linked oligosaccharide biosynthetic process"/>
    <property type="evidence" value="ECO:0000250"/>
    <property type="project" value="UniProtKB"/>
</dbReference>
<dbReference type="GO" id="GO:0034203">
    <property type="term" value="P:glycolipid translocation"/>
    <property type="evidence" value="ECO:0000314"/>
    <property type="project" value="SGD"/>
</dbReference>
<dbReference type="GO" id="GO:0006487">
    <property type="term" value="P:protein N-linked glycosylation"/>
    <property type="evidence" value="ECO:0000250"/>
    <property type="project" value="UniProtKB"/>
</dbReference>
<dbReference type="CDD" id="cd13130">
    <property type="entry name" value="MATE_rft1"/>
    <property type="match status" value="1"/>
</dbReference>
<dbReference type="InterPro" id="IPR007594">
    <property type="entry name" value="RFT1"/>
</dbReference>
<dbReference type="PANTHER" id="PTHR13117">
    <property type="entry name" value="ENDOPLASMIC RETICULUM MULTISPAN TRANSMEMBRANE PROTEIN-RELATED"/>
    <property type="match status" value="1"/>
</dbReference>
<dbReference type="PANTHER" id="PTHR13117:SF5">
    <property type="entry name" value="PROTEIN RFT1 HOMOLOG"/>
    <property type="match status" value="1"/>
</dbReference>
<dbReference type="Pfam" id="PF04506">
    <property type="entry name" value="Rft-1"/>
    <property type="match status" value="1"/>
</dbReference>